<name>LEUC_OCEIH</name>
<keyword id="KW-0004">4Fe-4S</keyword>
<keyword id="KW-0028">Amino-acid biosynthesis</keyword>
<keyword id="KW-0100">Branched-chain amino acid biosynthesis</keyword>
<keyword id="KW-0408">Iron</keyword>
<keyword id="KW-0411">Iron-sulfur</keyword>
<keyword id="KW-0432">Leucine biosynthesis</keyword>
<keyword id="KW-0456">Lyase</keyword>
<keyword id="KW-0479">Metal-binding</keyword>
<keyword id="KW-1185">Reference proteome</keyword>
<feature type="chain" id="PRO_0000076774" description="3-isopropylmalate dehydratase large subunit">
    <location>
        <begin position="1"/>
        <end position="468"/>
    </location>
</feature>
<feature type="binding site" evidence="1">
    <location>
        <position position="345"/>
    </location>
    <ligand>
        <name>[4Fe-4S] cluster</name>
        <dbReference type="ChEBI" id="CHEBI:49883"/>
    </ligand>
</feature>
<feature type="binding site" evidence="1">
    <location>
        <position position="405"/>
    </location>
    <ligand>
        <name>[4Fe-4S] cluster</name>
        <dbReference type="ChEBI" id="CHEBI:49883"/>
    </ligand>
</feature>
<feature type="binding site" evidence="1">
    <location>
        <position position="408"/>
    </location>
    <ligand>
        <name>[4Fe-4S] cluster</name>
        <dbReference type="ChEBI" id="CHEBI:49883"/>
    </ligand>
</feature>
<comment type="function">
    <text evidence="1">Catalyzes the isomerization between 2-isopropylmalate and 3-isopropylmalate, via the formation of 2-isopropylmaleate.</text>
</comment>
<comment type="catalytic activity">
    <reaction evidence="1">
        <text>(2R,3S)-3-isopropylmalate = (2S)-2-isopropylmalate</text>
        <dbReference type="Rhea" id="RHEA:32287"/>
        <dbReference type="ChEBI" id="CHEBI:1178"/>
        <dbReference type="ChEBI" id="CHEBI:35121"/>
        <dbReference type="EC" id="4.2.1.33"/>
    </reaction>
</comment>
<comment type="cofactor">
    <cofactor evidence="1">
        <name>[4Fe-4S] cluster</name>
        <dbReference type="ChEBI" id="CHEBI:49883"/>
    </cofactor>
    <text evidence="1">Binds 1 [4Fe-4S] cluster per subunit.</text>
</comment>
<comment type="pathway">
    <text evidence="1">Amino-acid biosynthesis; L-leucine biosynthesis; L-leucine from 3-methyl-2-oxobutanoate: step 2/4.</text>
</comment>
<comment type="subunit">
    <text evidence="1">Heterodimer of LeuC and LeuD.</text>
</comment>
<comment type="similarity">
    <text evidence="1">Belongs to the aconitase/IPM isomerase family. LeuC type 1 subfamily.</text>
</comment>
<evidence type="ECO:0000255" key="1">
    <source>
        <dbReference type="HAMAP-Rule" id="MF_01026"/>
    </source>
</evidence>
<gene>
    <name evidence="1" type="primary">leuC</name>
    <name type="ordered locus">OB2618</name>
</gene>
<dbReference type="EC" id="4.2.1.33" evidence="1"/>
<dbReference type="EMBL" id="BA000028">
    <property type="protein sequence ID" value="BAC14574.1"/>
    <property type="molecule type" value="Genomic_DNA"/>
</dbReference>
<dbReference type="RefSeq" id="WP_011067011.1">
    <property type="nucleotide sequence ID" value="NC_004193.1"/>
</dbReference>
<dbReference type="SMR" id="Q8EN69"/>
<dbReference type="STRING" id="221109.gene:10734870"/>
<dbReference type="KEGG" id="oih:OB2618"/>
<dbReference type="eggNOG" id="COG0065">
    <property type="taxonomic scope" value="Bacteria"/>
</dbReference>
<dbReference type="HOGENOM" id="CLU_006714_3_4_9"/>
<dbReference type="OrthoDB" id="9802769at2"/>
<dbReference type="PhylomeDB" id="Q8EN69"/>
<dbReference type="UniPathway" id="UPA00048">
    <property type="reaction ID" value="UER00071"/>
</dbReference>
<dbReference type="Proteomes" id="UP000000822">
    <property type="component" value="Chromosome"/>
</dbReference>
<dbReference type="GO" id="GO:0003861">
    <property type="term" value="F:3-isopropylmalate dehydratase activity"/>
    <property type="evidence" value="ECO:0007669"/>
    <property type="project" value="UniProtKB-UniRule"/>
</dbReference>
<dbReference type="GO" id="GO:0051539">
    <property type="term" value="F:4 iron, 4 sulfur cluster binding"/>
    <property type="evidence" value="ECO:0007669"/>
    <property type="project" value="UniProtKB-KW"/>
</dbReference>
<dbReference type="GO" id="GO:0046872">
    <property type="term" value="F:metal ion binding"/>
    <property type="evidence" value="ECO:0007669"/>
    <property type="project" value="UniProtKB-KW"/>
</dbReference>
<dbReference type="GO" id="GO:0009098">
    <property type="term" value="P:L-leucine biosynthetic process"/>
    <property type="evidence" value="ECO:0007669"/>
    <property type="project" value="UniProtKB-UniRule"/>
</dbReference>
<dbReference type="CDD" id="cd01583">
    <property type="entry name" value="IPMI"/>
    <property type="match status" value="1"/>
</dbReference>
<dbReference type="FunFam" id="3.30.499.10:FF:000007">
    <property type="entry name" value="3-isopropylmalate dehydratase large subunit"/>
    <property type="match status" value="1"/>
</dbReference>
<dbReference type="Gene3D" id="3.30.499.10">
    <property type="entry name" value="Aconitase, domain 3"/>
    <property type="match status" value="2"/>
</dbReference>
<dbReference type="HAMAP" id="MF_01026">
    <property type="entry name" value="LeuC_type1"/>
    <property type="match status" value="1"/>
</dbReference>
<dbReference type="InterPro" id="IPR004430">
    <property type="entry name" value="3-IsopropMal_deHydase_lsu"/>
</dbReference>
<dbReference type="InterPro" id="IPR015931">
    <property type="entry name" value="Acnase/IPM_dHydase_lsu_aba_1/3"/>
</dbReference>
<dbReference type="InterPro" id="IPR001030">
    <property type="entry name" value="Acoase/IPM_deHydtase_lsu_aba"/>
</dbReference>
<dbReference type="InterPro" id="IPR018136">
    <property type="entry name" value="Aconitase_4Fe-4S_BS"/>
</dbReference>
<dbReference type="InterPro" id="IPR036008">
    <property type="entry name" value="Aconitase_4Fe-4S_dom"/>
</dbReference>
<dbReference type="InterPro" id="IPR050067">
    <property type="entry name" value="IPM_dehydratase_rel_enz"/>
</dbReference>
<dbReference type="InterPro" id="IPR033941">
    <property type="entry name" value="IPMI_cat"/>
</dbReference>
<dbReference type="NCBIfam" id="TIGR00170">
    <property type="entry name" value="leuC"/>
    <property type="match status" value="1"/>
</dbReference>
<dbReference type="NCBIfam" id="NF004016">
    <property type="entry name" value="PRK05478.1"/>
    <property type="match status" value="1"/>
</dbReference>
<dbReference type="NCBIfam" id="NF009116">
    <property type="entry name" value="PRK12466.1"/>
    <property type="match status" value="1"/>
</dbReference>
<dbReference type="PANTHER" id="PTHR43822:SF9">
    <property type="entry name" value="3-ISOPROPYLMALATE DEHYDRATASE"/>
    <property type="match status" value="1"/>
</dbReference>
<dbReference type="PANTHER" id="PTHR43822">
    <property type="entry name" value="HOMOACONITASE, MITOCHONDRIAL-RELATED"/>
    <property type="match status" value="1"/>
</dbReference>
<dbReference type="Pfam" id="PF00330">
    <property type="entry name" value="Aconitase"/>
    <property type="match status" value="1"/>
</dbReference>
<dbReference type="PRINTS" id="PR00415">
    <property type="entry name" value="ACONITASE"/>
</dbReference>
<dbReference type="SUPFAM" id="SSF53732">
    <property type="entry name" value="Aconitase iron-sulfur domain"/>
    <property type="match status" value="1"/>
</dbReference>
<dbReference type="PROSITE" id="PS00450">
    <property type="entry name" value="ACONITASE_1"/>
    <property type="match status" value="1"/>
</dbReference>
<dbReference type="PROSITE" id="PS01244">
    <property type="entry name" value="ACONITASE_2"/>
    <property type="match status" value="1"/>
</dbReference>
<organism>
    <name type="scientific">Oceanobacillus iheyensis (strain DSM 14371 / CIP 107618 / JCM 11309 / KCTC 3954 / HTE831)</name>
    <dbReference type="NCBI Taxonomy" id="221109"/>
    <lineage>
        <taxon>Bacteria</taxon>
        <taxon>Bacillati</taxon>
        <taxon>Bacillota</taxon>
        <taxon>Bacilli</taxon>
        <taxon>Bacillales</taxon>
        <taxon>Bacillaceae</taxon>
        <taxon>Oceanobacillus</taxon>
    </lineage>
</organism>
<sequence length="468" mass="51298">MQKPQTIFEKIWENHMVHEEEGKPSLLYIDQHLVHEVTSPQAFEGLRLNNRKVRRPDLTFATMDHNVPTVNRESFKDEISKKQMDALKKNCEEFGIKLADMYHPDQGIVHVIGPQLGLTQPGKTIVCGDSHTSTHGAFGALAFGIGTSEVEHVLATQTIWQDKPKTLNVKVIGELGIGVTAKDLILAIIAKFGVQFGTGYVMEYTGESIRKMSMEERMTICNMSIEAGARAGLISPDQTTVDYLRGREMVPKGEAYDTLAAEWLQLATDEDAVYDDTVTIHANEIEPQVTWGTNPGMCVPISSSTPSIEKASYPDEVERALEYMGLTENQLMTSIEVDHVFIGSCTNSRLSDLKKAAAIVKGKKVKAGIRAMVVPGSFLVKQKAEEIGLDQVFMDAGFEWRNSGCSMCLGMNDDIVPAGGRCASTSNRNFEGRQGNGARTHLVSPEMAAAAAIEGHFVDVRSYASVPS</sequence>
<accession>Q8EN69</accession>
<protein>
    <recommendedName>
        <fullName evidence="1">3-isopropylmalate dehydratase large subunit</fullName>
        <ecNumber evidence="1">4.2.1.33</ecNumber>
    </recommendedName>
    <alternativeName>
        <fullName evidence="1">Alpha-IPM isomerase</fullName>
        <shortName evidence="1">IPMI</shortName>
    </alternativeName>
    <alternativeName>
        <fullName evidence="1">Isopropylmalate isomerase</fullName>
    </alternativeName>
</protein>
<proteinExistence type="inferred from homology"/>
<reference key="1">
    <citation type="journal article" date="2002" name="Nucleic Acids Res.">
        <title>Genome sequence of Oceanobacillus iheyensis isolated from the Iheya Ridge and its unexpected adaptive capabilities to extreme environments.</title>
        <authorList>
            <person name="Takami H."/>
            <person name="Takaki Y."/>
            <person name="Uchiyama I."/>
        </authorList>
    </citation>
    <scope>NUCLEOTIDE SEQUENCE [LARGE SCALE GENOMIC DNA]</scope>
    <source>
        <strain>DSM 14371 / CIP 107618 / JCM 11309 / KCTC 3954 / HTE831</strain>
    </source>
</reference>